<proteinExistence type="evidence at transcript level"/>
<sequence>MAPSSSSCHDAAASMLLCAEDNSSILWLEDEEGEVGERRSGGCRSMVGDLAAGGGGGSGGGGVEEEEDMFPRQSEECVASLVEREQAHMPRADYGERLRGGGGDVDLRVRSEAIGWIWEVYTYYNFSSVTAYLAVNYLDRFLSQYELPEGRDWMTQLLSVACLSIAAKMEETVVPQCLDLQIGEPRFLFEVETIHRMELLVLTNLNWRMQAVTPFSYIDYFLRKLNSGNAAPRSWLLRSSELILRIAAGTGFLEFRPSEIAAAVAATVAGEATGVVEEDIAEAFTHVDKGRVLQCQEAIQDHHYSMATINTVQPKPASTRRGSASASSSSVPESPVAVLDAGCLSYKSDDTDAATIASHGGGRRKSCFDSSPVTSKKRRKLSR</sequence>
<gene>
    <name type="primary">CYCD4-2</name>
    <name type="ordered locus">Os08g0479300</name>
    <name type="ordered locus">LOC_Os08g37390</name>
    <name type="ORF">OJ1113_A10.14</name>
    <name type="ORF">OsJ_026575</name>
</gene>
<evidence type="ECO:0000256" key="1">
    <source>
        <dbReference type="SAM" id="MobiDB-lite"/>
    </source>
</evidence>
<evidence type="ECO:0000305" key="2"/>
<dbReference type="EMBL" id="AP004643">
    <property type="protein sequence ID" value="BAD09749.1"/>
    <property type="molecule type" value="Genomic_DNA"/>
</dbReference>
<dbReference type="EMBL" id="AP008214">
    <property type="protein sequence ID" value="BAF23968.1"/>
    <property type="molecule type" value="Genomic_DNA"/>
</dbReference>
<dbReference type="EMBL" id="AP014964">
    <property type="protein sequence ID" value="BAT05907.1"/>
    <property type="molecule type" value="Genomic_DNA"/>
</dbReference>
<dbReference type="EMBL" id="CM000145">
    <property type="protein sequence ID" value="EAZ43092.1"/>
    <property type="molecule type" value="Genomic_DNA"/>
</dbReference>
<dbReference type="EMBL" id="AK070025">
    <property type="status" value="NOT_ANNOTATED_CDS"/>
    <property type="molecule type" value="mRNA"/>
</dbReference>
<dbReference type="EMBL" id="AY659999">
    <property type="protein sequence ID" value="AAV65960.1"/>
    <property type="molecule type" value="Genomic_DNA"/>
</dbReference>
<dbReference type="EMBL" id="AY660022">
    <property type="protein sequence ID" value="AAV66348.1"/>
    <property type="molecule type" value="Genomic_DNA"/>
</dbReference>
<dbReference type="EMBL" id="AY660030">
    <property type="protein sequence ID" value="AAT72758.1"/>
    <property type="molecule type" value="Genomic_DNA"/>
</dbReference>
<dbReference type="EMBL" id="AY660533">
    <property type="protein sequence ID" value="AAT72760.1"/>
    <property type="molecule type" value="Genomic_DNA"/>
</dbReference>
<dbReference type="EMBL" id="AY660537">
    <property type="protein sequence ID" value="AAT72761.1"/>
    <property type="molecule type" value="Genomic_DNA"/>
</dbReference>
<dbReference type="EMBL" id="AY660569">
    <property type="protein sequence ID" value="AAT72763.1"/>
    <property type="molecule type" value="Genomic_DNA"/>
</dbReference>
<dbReference type="EMBL" id="AY660570">
    <property type="protein sequence ID" value="AAT72762.1"/>
    <property type="molecule type" value="Genomic_DNA"/>
</dbReference>
<dbReference type="EMBL" id="AY660573">
    <property type="protein sequence ID" value="AAV69066.1"/>
    <property type="molecule type" value="Genomic_DNA"/>
</dbReference>
<dbReference type="EMBL" id="AY660575">
    <property type="protein sequence ID" value="AAT72759.1"/>
    <property type="molecule type" value="Genomic_DNA"/>
</dbReference>
<dbReference type="RefSeq" id="XP_015648876.1">
    <property type="nucleotide sequence ID" value="XM_015793390.1"/>
</dbReference>
<dbReference type="SMR" id="Q4KYM5"/>
<dbReference type="FunCoup" id="Q4KYM5">
    <property type="interactions" value="315"/>
</dbReference>
<dbReference type="STRING" id="39947.Q4KYM5"/>
<dbReference type="PaxDb" id="39947-Q4KYM5"/>
<dbReference type="EnsemblPlants" id="Os08t0479300-01">
    <property type="protein sequence ID" value="Os08t0479300-01"/>
    <property type="gene ID" value="Os08g0479300"/>
</dbReference>
<dbReference type="Gramene" id="Os08t0479300-01">
    <property type="protein sequence ID" value="Os08t0479300-01"/>
    <property type="gene ID" value="Os08g0479300"/>
</dbReference>
<dbReference type="KEGG" id="dosa:Os08g0479300"/>
<dbReference type="eggNOG" id="KOG0656">
    <property type="taxonomic scope" value="Eukaryota"/>
</dbReference>
<dbReference type="HOGENOM" id="CLU_048040_1_1_1"/>
<dbReference type="InParanoid" id="Q4KYM5"/>
<dbReference type="OMA" id="IDWICKA"/>
<dbReference type="OrthoDB" id="5590282at2759"/>
<dbReference type="PlantReactome" id="R-OSA-9640760">
    <property type="pathway name" value="G1 phase"/>
</dbReference>
<dbReference type="PlantReactome" id="R-OSA-9640887">
    <property type="pathway name" value="G1/S transition"/>
</dbReference>
<dbReference type="Proteomes" id="UP000000763">
    <property type="component" value="Chromosome 8"/>
</dbReference>
<dbReference type="Proteomes" id="UP000007752">
    <property type="component" value="Chromosome 8"/>
</dbReference>
<dbReference type="Proteomes" id="UP000059680">
    <property type="component" value="Chromosome 8"/>
</dbReference>
<dbReference type="GO" id="GO:0000307">
    <property type="term" value="C:cyclin-dependent protein kinase holoenzyme complex"/>
    <property type="evidence" value="ECO:0000318"/>
    <property type="project" value="GO_Central"/>
</dbReference>
<dbReference type="GO" id="GO:0005737">
    <property type="term" value="C:cytoplasm"/>
    <property type="evidence" value="ECO:0000318"/>
    <property type="project" value="GO_Central"/>
</dbReference>
<dbReference type="GO" id="GO:0005634">
    <property type="term" value="C:nucleus"/>
    <property type="evidence" value="ECO:0000318"/>
    <property type="project" value="GO_Central"/>
</dbReference>
<dbReference type="GO" id="GO:0016538">
    <property type="term" value="F:cyclin-dependent protein serine/threonine kinase regulator activity"/>
    <property type="evidence" value="ECO:0000318"/>
    <property type="project" value="GO_Central"/>
</dbReference>
<dbReference type="GO" id="GO:0051301">
    <property type="term" value="P:cell division"/>
    <property type="evidence" value="ECO:0007669"/>
    <property type="project" value="UniProtKB-KW"/>
</dbReference>
<dbReference type="GO" id="GO:0000082">
    <property type="term" value="P:G1/S transition of mitotic cell cycle"/>
    <property type="evidence" value="ECO:0000318"/>
    <property type="project" value="GO_Central"/>
</dbReference>
<dbReference type="CDD" id="cd20543">
    <property type="entry name" value="CYCLIN_AtCycD-like_rpt1"/>
    <property type="match status" value="1"/>
</dbReference>
<dbReference type="CDD" id="cd20544">
    <property type="entry name" value="CYCLIN_AtCycD-like_rpt2"/>
    <property type="match status" value="1"/>
</dbReference>
<dbReference type="FunFam" id="1.10.472.10:FF:000034">
    <property type="entry name" value="D2/4-type cyclin"/>
    <property type="match status" value="1"/>
</dbReference>
<dbReference type="FunFam" id="1.10.472.10:FF:000040">
    <property type="entry name" value="D6-type cyclin"/>
    <property type="match status" value="1"/>
</dbReference>
<dbReference type="Gene3D" id="1.10.472.10">
    <property type="entry name" value="Cyclin-like"/>
    <property type="match status" value="2"/>
</dbReference>
<dbReference type="InterPro" id="IPR039361">
    <property type="entry name" value="Cyclin"/>
</dbReference>
<dbReference type="InterPro" id="IPR013763">
    <property type="entry name" value="Cyclin-like_dom"/>
</dbReference>
<dbReference type="InterPro" id="IPR036915">
    <property type="entry name" value="Cyclin-like_sf"/>
</dbReference>
<dbReference type="InterPro" id="IPR004367">
    <property type="entry name" value="Cyclin_C-dom"/>
</dbReference>
<dbReference type="InterPro" id="IPR006671">
    <property type="entry name" value="Cyclin_N"/>
</dbReference>
<dbReference type="InterPro" id="IPR048258">
    <property type="entry name" value="Cyclins_cyclin-box"/>
</dbReference>
<dbReference type="PANTHER" id="PTHR10177">
    <property type="entry name" value="CYCLINS"/>
    <property type="match status" value="1"/>
</dbReference>
<dbReference type="Pfam" id="PF02984">
    <property type="entry name" value="Cyclin_C"/>
    <property type="match status" value="1"/>
</dbReference>
<dbReference type="Pfam" id="PF00134">
    <property type="entry name" value="Cyclin_N"/>
    <property type="match status" value="1"/>
</dbReference>
<dbReference type="SMART" id="SM00385">
    <property type="entry name" value="CYCLIN"/>
    <property type="match status" value="1"/>
</dbReference>
<dbReference type="SMART" id="SM01332">
    <property type="entry name" value="Cyclin_C"/>
    <property type="match status" value="1"/>
</dbReference>
<dbReference type="SUPFAM" id="SSF47954">
    <property type="entry name" value="Cyclin-like"/>
    <property type="match status" value="1"/>
</dbReference>
<dbReference type="PROSITE" id="PS00292">
    <property type="entry name" value="CYCLINS"/>
    <property type="match status" value="1"/>
</dbReference>
<protein>
    <recommendedName>
        <fullName>Cyclin-D4-2</fullName>
    </recommendedName>
    <alternativeName>
        <fullName>G1/S-specific cyclin-D4-2</fullName>
        <shortName>CycD4;2</shortName>
    </alternativeName>
</protein>
<reference key="1">
    <citation type="journal article" date="2005" name="Nature">
        <title>The map-based sequence of the rice genome.</title>
        <authorList>
            <consortium name="International rice genome sequencing project (IRGSP)"/>
        </authorList>
    </citation>
    <scope>NUCLEOTIDE SEQUENCE [LARGE SCALE GENOMIC DNA]</scope>
    <source>
        <strain>cv. Nipponbare</strain>
    </source>
</reference>
<reference key="2">
    <citation type="journal article" date="2008" name="Nucleic Acids Res.">
        <title>The rice annotation project database (RAP-DB): 2008 update.</title>
        <authorList>
            <consortium name="The rice annotation project (RAP)"/>
        </authorList>
    </citation>
    <scope>GENOME REANNOTATION</scope>
    <source>
        <strain>cv. Nipponbare</strain>
    </source>
</reference>
<reference key="3">
    <citation type="journal article" date="2013" name="Rice">
        <title>Improvement of the Oryza sativa Nipponbare reference genome using next generation sequence and optical map data.</title>
        <authorList>
            <person name="Kawahara Y."/>
            <person name="de la Bastide M."/>
            <person name="Hamilton J.P."/>
            <person name="Kanamori H."/>
            <person name="McCombie W.R."/>
            <person name="Ouyang S."/>
            <person name="Schwartz D.C."/>
            <person name="Tanaka T."/>
            <person name="Wu J."/>
            <person name="Zhou S."/>
            <person name="Childs K.L."/>
            <person name="Davidson R.M."/>
            <person name="Lin H."/>
            <person name="Quesada-Ocampo L."/>
            <person name="Vaillancourt B."/>
            <person name="Sakai H."/>
            <person name="Lee S.S."/>
            <person name="Kim J."/>
            <person name="Numa H."/>
            <person name="Itoh T."/>
            <person name="Buell C.R."/>
            <person name="Matsumoto T."/>
        </authorList>
    </citation>
    <scope>GENOME REANNOTATION</scope>
    <source>
        <strain>cv. Nipponbare</strain>
    </source>
</reference>
<reference key="4">
    <citation type="journal article" date="2005" name="PLoS Biol.">
        <title>The genomes of Oryza sativa: a history of duplications.</title>
        <authorList>
            <person name="Yu J."/>
            <person name="Wang J."/>
            <person name="Lin W."/>
            <person name="Li S."/>
            <person name="Li H."/>
            <person name="Zhou J."/>
            <person name="Ni P."/>
            <person name="Dong W."/>
            <person name="Hu S."/>
            <person name="Zeng C."/>
            <person name="Zhang J."/>
            <person name="Zhang Y."/>
            <person name="Li R."/>
            <person name="Xu Z."/>
            <person name="Li S."/>
            <person name="Li X."/>
            <person name="Zheng H."/>
            <person name="Cong L."/>
            <person name="Lin L."/>
            <person name="Yin J."/>
            <person name="Geng J."/>
            <person name="Li G."/>
            <person name="Shi J."/>
            <person name="Liu J."/>
            <person name="Lv H."/>
            <person name="Li J."/>
            <person name="Wang J."/>
            <person name="Deng Y."/>
            <person name="Ran L."/>
            <person name="Shi X."/>
            <person name="Wang X."/>
            <person name="Wu Q."/>
            <person name="Li C."/>
            <person name="Ren X."/>
            <person name="Wang J."/>
            <person name="Wang X."/>
            <person name="Li D."/>
            <person name="Liu D."/>
            <person name="Zhang X."/>
            <person name="Ji Z."/>
            <person name="Zhao W."/>
            <person name="Sun Y."/>
            <person name="Zhang Z."/>
            <person name="Bao J."/>
            <person name="Han Y."/>
            <person name="Dong L."/>
            <person name="Ji J."/>
            <person name="Chen P."/>
            <person name="Wu S."/>
            <person name="Liu J."/>
            <person name="Xiao Y."/>
            <person name="Bu D."/>
            <person name="Tan J."/>
            <person name="Yang L."/>
            <person name="Ye C."/>
            <person name="Zhang J."/>
            <person name="Xu J."/>
            <person name="Zhou Y."/>
            <person name="Yu Y."/>
            <person name="Zhang B."/>
            <person name="Zhuang S."/>
            <person name="Wei H."/>
            <person name="Liu B."/>
            <person name="Lei M."/>
            <person name="Yu H."/>
            <person name="Li Y."/>
            <person name="Xu H."/>
            <person name="Wei S."/>
            <person name="He X."/>
            <person name="Fang L."/>
            <person name="Zhang Z."/>
            <person name="Zhang Y."/>
            <person name="Huang X."/>
            <person name="Su Z."/>
            <person name="Tong W."/>
            <person name="Li J."/>
            <person name="Tong Z."/>
            <person name="Li S."/>
            <person name="Ye J."/>
            <person name="Wang L."/>
            <person name="Fang L."/>
            <person name="Lei T."/>
            <person name="Chen C.-S."/>
            <person name="Chen H.-C."/>
            <person name="Xu Z."/>
            <person name="Li H."/>
            <person name="Huang H."/>
            <person name="Zhang F."/>
            <person name="Xu H."/>
            <person name="Li N."/>
            <person name="Zhao C."/>
            <person name="Li S."/>
            <person name="Dong L."/>
            <person name="Huang Y."/>
            <person name="Li L."/>
            <person name="Xi Y."/>
            <person name="Qi Q."/>
            <person name="Li W."/>
            <person name="Zhang B."/>
            <person name="Hu W."/>
            <person name="Zhang Y."/>
            <person name="Tian X."/>
            <person name="Jiao Y."/>
            <person name="Liang X."/>
            <person name="Jin J."/>
            <person name="Gao L."/>
            <person name="Zheng W."/>
            <person name="Hao B."/>
            <person name="Liu S.-M."/>
            <person name="Wang W."/>
            <person name="Yuan L."/>
            <person name="Cao M."/>
            <person name="McDermott J."/>
            <person name="Samudrala R."/>
            <person name="Wang J."/>
            <person name="Wong G.K.-S."/>
            <person name="Yang H."/>
        </authorList>
    </citation>
    <scope>NUCLEOTIDE SEQUENCE [LARGE SCALE GENOMIC DNA]</scope>
    <source>
        <strain>cv. Nipponbare</strain>
    </source>
</reference>
<reference key="5">
    <citation type="journal article" date="2003" name="Science">
        <title>Collection, mapping, and annotation of over 28,000 cDNA clones from japonica rice.</title>
        <authorList>
            <consortium name="The rice full-length cDNA consortium"/>
        </authorList>
    </citation>
    <scope>NUCLEOTIDE SEQUENCE [LARGE SCALE MRNA]</scope>
    <source>
        <strain>cv. Nipponbare</strain>
    </source>
</reference>
<reference key="6">
    <citation type="submission" date="2004-06" db="EMBL/GenBank/DDBJ databases">
        <title>Partial putative D type cyclin in rice.</title>
        <authorList>
            <person name="Elumalai S."/>
            <person name="Qu R."/>
            <person name="Sivamani T."/>
            <person name="Davis S.J."/>
            <person name="Au M.R."/>
            <person name="Gossett N.J."/>
            <person name="Childress R.H."/>
            <person name="Navolio L.E."/>
            <person name="Hicks B.N."/>
        </authorList>
    </citation>
    <scope>PARTIAL NUCLEOTIDE SEQUENCE [GENOMIC DNA]</scope>
    <source>
        <strain>cv. Taipei 309</strain>
    </source>
</reference>
<reference key="7">
    <citation type="journal article" date="2006" name="Mol. Genet. Genomics">
        <title>Genome-wide analysis of cyclin family in rice (Oryza sativa L.).</title>
        <authorList>
            <person name="La H."/>
            <person name="Li J."/>
            <person name="Ji Z."/>
            <person name="Cheng Y."/>
            <person name="Li X."/>
            <person name="Jiang S."/>
            <person name="Venkatesh P.N."/>
            <person name="Ramachandran S."/>
        </authorList>
    </citation>
    <scope>GENE FAMILY</scope>
    <scope>NOMENCLATURE</scope>
</reference>
<accession>Q4KYM5</accession>
<accession>A0A0P0XHR2</accession>
<accession>Q5SD44</accession>
<accession>Q5SD46</accession>
<accession>Q6DMP1</accession>
<accession>Q6DMP6</accession>
<accession>Q6DMP7</accession>
<accession>Q6DMQ0</accession>
<accession>Q6DMQ7</accession>
<accession>Q6ZB91</accession>
<feature type="chain" id="PRO_0000287032" description="Cyclin-D4-2">
    <location>
        <begin position="1"/>
        <end position="383"/>
    </location>
</feature>
<feature type="region of interest" description="Disordered" evidence="1">
    <location>
        <begin position="51"/>
        <end position="70"/>
    </location>
</feature>
<feature type="region of interest" description="Disordered" evidence="1">
    <location>
        <begin position="313"/>
        <end position="335"/>
    </location>
</feature>
<feature type="region of interest" description="Disordered" evidence="1">
    <location>
        <begin position="354"/>
        <end position="383"/>
    </location>
</feature>
<feature type="compositionally biased region" description="Gly residues" evidence="1">
    <location>
        <begin position="51"/>
        <end position="62"/>
    </location>
</feature>
<feature type="compositionally biased region" description="Low complexity" evidence="1">
    <location>
        <begin position="323"/>
        <end position="335"/>
    </location>
</feature>
<feature type="sequence conflict" description="In Ref. 6; AAT72763." evidence="2" ref="6">
    <original>VGE</original>
    <variation>RWG</variation>
    <location>
        <begin position="35"/>
        <end position="37"/>
    </location>
</feature>
<feature type="sequence conflict" description="In Ref. 6; AAT72761." evidence="2" ref="6">
    <original>V</original>
    <variation>W</variation>
    <location>
        <position position="35"/>
    </location>
</feature>
<feature type="sequence conflict" description="In Ref. 6; AAT72762/AAV66348." evidence="2" ref="6">
    <original>E</original>
    <variation>G</variation>
    <location>
        <position position="37"/>
    </location>
</feature>
<feature type="sequence conflict" description="In Ref. 5; AK070025." evidence="2" ref="5">
    <original>K</original>
    <variation>E</variation>
    <location>
        <position position="224"/>
    </location>
</feature>
<comment type="similarity">
    <text evidence="2">Belongs to the cyclin family. Cyclin D subfamily.</text>
</comment>
<keyword id="KW-0131">Cell cycle</keyword>
<keyword id="KW-0132">Cell division</keyword>
<keyword id="KW-0195">Cyclin</keyword>
<keyword id="KW-1185">Reference proteome</keyword>
<organism>
    <name type="scientific">Oryza sativa subsp. japonica</name>
    <name type="common">Rice</name>
    <dbReference type="NCBI Taxonomy" id="39947"/>
    <lineage>
        <taxon>Eukaryota</taxon>
        <taxon>Viridiplantae</taxon>
        <taxon>Streptophyta</taxon>
        <taxon>Embryophyta</taxon>
        <taxon>Tracheophyta</taxon>
        <taxon>Spermatophyta</taxon>
        <taxon>Magnoliopsida</taxon>
        <taxon>Liliopsida</taxon>
        <taxon>Poales</taxon>
        <taxon>Poaceae</taxon>
        <taxon>BOP clade</taxon>
        <taxon>Oryzoideae</taxon>
        <taxon>Oryzeae</taxon>
        <taxon>Oryzinae</taxon>
        <taxon>Oryza</taxon>
        <taxon>Oryza sativa</taxon>
    </lineage>
</organism>
<name>CCD42_ORYSJ</name>